<dbReference type="EMBL" id="JT021412">
    <property type="status" value="NOT_ANNOTATED_CDS"/>
    <property type="molecule type" value="mRNA"/>
</dbReference>
<dbReference type="OrthoDB" id="5979655at2759"/>
<dbReference type="GO" id="GO:0005576">
    <property type="term" value="C:extracellular region"/>
    <property type="evidence" value="ECO:0007669"/>
    <property type="project" value="UniProtKB-SubCell"/>
</dbReference>
<organism>
    <name type="scientific">Acropora millepora</name>
    <name type="common">Staghorn coral</name>
    <name type="synonym">Heteropora millepora</name>
    <dbReference type="NCBI Taxonomy" id="45264"/>
    <lineage>
        <taxon>Eukaryota</taxon>
        <taxon>Metazoa</taxon>
        <taxon>Cnidaria</taxon>
        <taxon>Anthozoa</taxon>
        <taxon>Hexacorallia</taxon>
        <taxon>Scleractinia</taxon>
        <taxon>Astrocoeniina</taxon>
        <taxon>Acroporidae</taxon>
        <taxon>Acropora</taxon>
    </lineage>
</organism>
<feature type="chain" id="PRO_0000429755" description="Uncharacterized skeletal organic matrix protein 1">
    <location>
        <begin position="1" status="less than"/>
        <end position="448" status="greater than"/>
    </location>
</feature>
<feature type="non-terminal residue" evidence="3">
    <location>
        <position position="1"/>
    </location>
</feature>
<feature type="non-terminal residue" evidence="3">
    <location>
        <position position="448"/>
    </location>
</feature>
<name>USOM1_ACRMI</name>
<comment type="subcellular location">
    <subcellularLocation>
        <location evidence="4">Secreted</location>
    </subcellularLocation>
</comment>
<comment type="tissue specificity">
    <text evidence="1">Component of the acid-insoluble and acid-soluble organic matrix of the aragonitic skeleton (at protein level).</text>
</comment>
<proteinExistence type="evidence at protein level"/>
<reference evidence="3" key="1">
    <citation type="journal article" date="2012" name="Mol. Ecol.">
        <title>Whole transcriptome analysis of the coral Acropora millepora reveals complex responses to CO(2)-driven acidification during the initiation of calcification.</title>
        <authorList>
            <person name="Moya A."/>
            <person name="Huisman L."/>
            <person name="Ball E.E."/>
            <person name="Hayward D.C."/>
            <person name="Grasso L.C."/>
            <person name="Chua C.M."/>
            <person name="Woo H.N."/>
            <person name="Gattuso J.P."/>
            <person name="Foret S."/>
            <person name="Miller D.J."/>
        </authorList>
    </citation>
    <scope>NUCLEOTIDE SEQUENCE [MRNA]</scope>
</reference>
<reference evidence="3" key="2">
    <citation type="journal article" date="2013" name="Mol. Biol. Evol.">
        <title>The skeletal proteome of the coral Acropora millepora: the evolution of calcification by co-option and domain shuffling.</title>
        <authorList>
            <person name="Ramos-Silva P."/>
            <person name="Kaandorp J."/>
            <person name="Huisman L."/>
            <person name="Marie B."/>
            <person name="Zanella-Cleon I."/>
            <person name="Guichard N."/>
            <person name="Miller D.J."/>
            <person name="Marin F."/>
        </authorList>
    </citation>
    <scope>PROTEIN SEQUENCE OF 252-263; 306-319 AND 363-376</scope>
    <scope>TISSUE SPECIFICITY</scope>
    <scope>IDENTIFICATION BY MASS SPECTROMETRY</scope>
</reference>
<accession>B3EX00</accession>
<keyword id="KW-0903">Direct protein sequencing</keyword>
<keyword id="KW-0964">Secreted</keyword>
<sequence length="448" mass="49438">KSNGMVSEGHAYFSQQLNFETPIRTENGTEISMIKMTVKSRVLLXGTVALIYPSPESIDFQGLFVKLFLSKPSPPVLSLNETTDAGQFSLNDTNEDPFAPLSRSRRAVSNSXNANASLVSEILERIGPVCLFFDRQFQLYSLNVNSVNLTLSASVSVQIDGPHTSRIDVSLVLSVGQNLTSVVIQKFVRMVSLQELSDVNLNFPPIFRFLRGSTSFLESNTDVRGRLVVLARFRLSLPLQNNSVDPPRLNLKIEPYAVIVVRRLIVAMSVBXIQQXVXARXVVXXSGPKVTLSFNDDQLCVTVSDRVIGPDVPVTFFRRLRVCRRIPRVGRLWVRTRRGWRLRRIFTFSRRCFWVIISGFRGRLSPTVTQEGFVRVCNITKAANPSILLPTPTSQIAQSISTAQMVSSTSASIFATPVLALQSSSLRISPASTAPTSATVSSPVASIS</sequence>
<evidence type="ECO:0000269" key="1">
    <source>
    </source>
</evidence>
<evidence type="ECO:0000303" key="2">
    <source>
    </source>
</evidence>
<evidence type="ECO:0000305" key="3"/>
<evidence type="ECO:0000305" key="4">
    <source>
    </source>
</evidence>
<protein>
    <recommendedName>
        <fullName evidence="2">Uncharacterized skeletal organic matrix protein 1</fullName>
        <shortName evidence="2">Uncharacterized SOMP-1</shortName>
    </recommendedName>
</protein>